<accession>G3XMB7</accession>
<reference key="1">
    <citation type="journal article" date="2011" name="Genome Res.">
        <title>Comparative genomics of citric-acid-producing Aspergillus niger ATCC 1015 versus enzyme-producing CBS 513.88.</title>
        <authorList>
            <person name="Andersen M.R."/>
            <person name="Salazar M.P."/>
            <person name="Schaap P.J."/>
            <person name="van de Vondervoort P.J.I."/>
            <person name="Culley D."/>
            <person name="Thykaer J."/>
            <person name="Frisvad J.C."/>
            <person name="Nielsen K.F."/>
            <person name="Albang R."/>
            <person name="Albermann K."/>
            <person name="Berka R.M."/>
            <person name="Braus G.H."/>
            <person name="Braus-Stromeyer S.A."/>
            <person name="Corrochano L.M."/>
            <person name="Dai Z."/>
            <person name="van Dijck P.W.M."/>
            <person name="Hofmann G."/>
            <person name="Lasure L.L."/>
            <person name="Magnuson J.K."/>
            <person name="Menke H."/>
            <person name="Meijer M."/>
            <person name="Meijer S.L."/>
            <person name="Nielsen J.B."/>
            <person name="Nielsen M.L."/>
            <person name="van Ooyen A.J.J."/>
            <person name="Pel H.J."/>
            <person name="Poulsen L."/>
            <person name="Samson R.A."/>
            <person name="Stam H."/>
            <person name="Tsang A."/>
            <person name="van den Brink J.M."/>
            <person name="Atkins A."/>
            <person name="Aerts A."/>
            <person name="Shapiro H."/>
            <person name="Pangilinan J."/>
            <person name="Salamov A."/>
            <person name="Lou Y."/>
            <person name="Lindquist E."/>
            <person name="Lucas S."/>
            <person name="Grimwood J."/>
            <person name="Grigoriev I.V."/>
            <person name="Kubicek C.P."/>
            <person name="Martinez D."/>
            <person name="van Peij N.N.M.E."/>
            <person name="Roubos J.A."/>
            <person name="Nielsen J."/>
            <person name="Baker S.E."/>
        </authorList>
    </citation>
    <scope>NUCLEOTIDE SEQUENCE [LARGE SCALE GENOMIC DNA]</scope>
    <source>
        <strain>ATCC 1015 / CBS 113.46 / FGSC A1144 / LSHB Ac4 / NCTC 3858a / NRRL 328 / USDA 3528.7</strain>
    </source>
</reference>
<reference key="2">
    <citation type="journal article" date="2012" name="Chem. Biol.">
        <title>Characterization of a silent azaphilone gene cluster from Aspergillus niger ATCC 1015 reveals a hydroxylation-mediated pyran-ring formation.</title>
        <authorList>
            <person name="Zabala A.O."/>
            <person name="Xu W."/>
            <person name="Chooi Y.H."/>
            <person name="Tang Y."/>
        </authorList>
    </citation>
    <scope>FUNCTION</scope>
    <scope>INDUCTION</scope>
</reference>
<gene>
    <name evidence="3" type="primary">azaC</name>
    <name type="ORF">ASPNIDRAFT_50208</name>
</gene>
<organism>
    <name type="scientific">Aspergillus niger (strain ATCC 1015 / CBS 113.46 / FGSC A1144 / LSHB Ac4 / NCTC 3858a / NRRL 328 / USDA 3528.7)</name>
    <dbReference type="NCBI Taxonomy" id="380704"/>
    <lineage>
        <taxon>Eukaryota</taxon>
        <taxon>Fungi</taxon>
        <taxon>Dikarya</taxon>
        <taxon>Ascomycota</taxon>
        <taxon>Pezizomycotina</taxon>
        <taxon>Eurotiomycetes</taxon>
        <taxon>Eurotiomycetidae</taxon>
        <taxon>Eurotiales</taxon>
        <taxon>Aspergillaceae</taxon>
        <taxon>Aspergillus</taxon>
        <taxon>Aspergillus subgen. Circumdati</taxon>
    </lineage>
</organism>
<keyword id="KW-0378">Hydrolase</keyword>
<dbReference type="EC" id="3.1.2.-" evidence="5"/>
<dbReference type="EMBL" id="ACJE01000001">
    <property type="protein sequence ID" value="EHA28230.1"/>
    <property type="molecule type" value="Genomic_DNA"/>
</dbReference>
<dbReference type="SMR" id="G3XMB7"/>
<dbReference type="STRING" id="380704.G3XMB7"/>
<dbReference type="ESTHER" id="aspna-azac">
    <property type="family name" value="FSH1"/>
</dbReference>
<dbReference type="VEuPathDB" id="FungiDB:ASPNIDRAFT2_1079432"/>
<dbReference type="HOGENOM" id="CLU_051938_0_0_1"/>
<dbReference type="OrthoDB" id="33639at5052"/>
<dbReference type="Proteomes" id="UP000009038">
    <property type="component" value="Unassembled WGS sequence"/>
</dbReference>
<dbReference type="GO" id="GO:0005737">
    <property type="term" value="C:cytoplasm"/>
    <property type="evidence" value="ECO:0007669"/>
    <property type="project" value="TreeGrafter"/>
</dbReference>
<dbReference type="GO" id="GO:0005634">
    <property type="term" value="C:nucleus"/>
    <property type="evidence" value="ECO:0007669"/>
    <property type="project" value="TreeGrafter"/>
</dbReference>
<dbReference type="GO" id="GO:0016787">
    <property type="term" value="F:hydrolase activity"/>
    <property type="evidence" value="ECO:0007669"/>
    <property type="project" value="UniProtKB-KW"/>
</dbReference>
<dbReference type="GO" id="GO:0044550">
    <property type="term" value="P:secondary metabolite biosynthetic process"/>
    <property type="evidence" value="ECO:0007669"/>
    <property type="project" value="TreeGrafter"/>
</dbReference>
<dbReference type="Gene3D" id="3.40.50.1820">
    <property type="entry name" value="alpha/beta hydrolase"/>
    <property type="match status" value="1"/>
</dbReference>
<dbReference type="InterPro" id="IPR029058">
    <property type="entry name" value="AB_hydrolase_fold"/>
</dbReference>
<dbReference type="InterPro" id="IPR005645">
    <property type="entry name" value="FSH-like_dom"/>
</dbReference>
<dbReference type="InterPro" id="IPR050593">
    <property type="entry name" value="LovG"/>
</dbReference>
<dbReference type="PANTHER" id="PTHR48070:SF3">
    <property type="entry name" value="ESTERASE DBAE-RELATED"/>
    <property type="match status" value="1"/>
</dbReference>
<dbReference type="PANTHER" id="PTHR48070">
    <property type="entry name" value="ESTERASE OVCA2"/>
    <property type="match status" value="1"/>
</dbReference>
<dbReference type="Pfam" id="PF03959">
    <property type="entry name" value="FSH1"/>
    <property type="match status" value="1"/>
</dbReference>
<dbReference type="SUPFAM" id="SSF53474">
    <property type="entry name" value="alpha/beta-Hydrolases"/>
    <property type="match status" value="1"/>
</dbReference>
<proteinExistence type="evidence at transcript level"/>
<protein>
    <recommendedName>
        <fullName evidence="3">Probable esterase azaC</fullName>
        <ecNumber evidence="5">3.1.2.-</ecNumber>
    </recommendedName>
    <alternativeName>
        <fullName evidence="3">Azaphilone biosynthesis cluster protein azaC</fullName>
    </alternativeName>
</protein>
<name>AZAC_ASPNA</name>
<sequence>MPAKLPDDTTLRLPRILCLHGGGTNARIFRAQCRVLSTLLSPHFRLCFAEAPFPSQPGPDVVSVYRHFGDFKSWIPMPPNPSISPTNVAKKILNSLRHTIEEDDRSGADGEWVAVLGFSQGARLAASLLFQEQNGGSGMVGVYGGVNFRFAVLLAGRGPMIPLDMDAMASVSSAVLSLPTIHVHGLQDPGLEHHRELLERYCNRETASLIEWEGNHRVPIKMKDARVVVEEILKIAQKTGCLVPPTIQGGGTSNCGALLLDR</sequence>
<evidence type="ECO:0000250" key="1">
    <source>
        <dbReference type="UniProtKB" id="P38777"/>
    </source>
</evidence>
<evidence type="ECO:0000269" key="2">
    <source>
    </source>
</evidence>
<evidence type="ECO:0000303" key="3">
    <source>
    </source>
</evidence>
<evidence type="ECO:0000305" key="4"/>
<evidence type="ECO:0000305" key="5">
    <source>
    </source>
</evidence>
<feature type="chain" id="PRO_0000437620" description="Probable esterase azaC">
    <location>
        <begin position="1"/>
        <end position="262"/>
    </location>
</feature>
<feature type="active site" description="Charge relay system" evidence="1">
    <location>
        <position position="119"/>
    </location>
</feature>
<feature type="active site" description="Charge relay system" evidence="1">
    <location>
        <position position="188"/>
    </location>
</feature>
<feature type="active site" description="Charge relay system" evidence="1">
    <location>
        <position position="216"/>
    </location>
</feature>
<comment type="function">
    <text evidence="2">Probable esterase; part of the gene cluster that mediates the biosynthesis of azaphilones, a class of fungal metabolites characterized by a highly oxygenated pyrano-quinone bicyclic core and exhibiting a broad range of bioactivities (PubMed:22921072). In the first step, the non-reducing polyketide synthase azaA forms the hexaketide precursor from successive condensations of five malonyl-CoA units, presumably with a simple acetyl-CoA starter unit (PubMed:22921072). The reactive polyketide chain then undergoes a PT-mediated C2-C7 cyclization to afford the aromatic ring and is eventually released as an aldehyde through the R-domain (PubMed:22921072). The putative ketoreductase azaE is proposed to catalyze the reduction of the terminal ketone resulting in the early culture product FK17-P2a (PubMed:22921072). The monooxygenase azaH was demonstrated to be the only enzyme required to convert FK17-P2a to azanigerone E (PubMed:22921072). AzaH first hydroxylates the benzaldehyde intermediate FK17-P2a at C4, which triggers the formation of the pyran-ring to afford azanigerone E (PubMed:22921072). In parallel, the 2,4-dimethylhexanoyl chain is synthesized by the HR-PKS azaB and is proposed to be transferred to the C4-hydroxyl of azanigerone E by the acyltransferase azaD directly from the ACP domain of azaB (PubMed:22921072). Alternatively, the 2,4-dimethyl-hexanoyl chain may be offloaded from the HR-PKS as a carboxylic acid and converted to an acyl-CoA by azaF (PubMed:22921072). The resulting acyl-CoA molecule could then be taken up as a substrate by AzaD to form azanigerone B (PubMed:22921072). To yield the carboxylic acid substituent in azanigerone A, the hydroxypropyl side chain of azanigerone B would need to undergo a C-C oxidative cleavage catalyzed by cytochrome P450 AzaI (PubMed:22921072). AzaI is proposed to act on a vicinal diol that leads to a C-C bond scission either through an alkoxyradical intermediate or a peroxy complex (PubMed:22921072). In the biosynthesis of azanigerone A, azanigerone B first undergoes hydroxylation at C10, possibly catalyzed by one of the two FAD-dependent monooxygenases encoded in the cluster, azaG or azaL, resulting in the vicinal diol azanigerone C (PubMed:22921072). Oxidative cleavage of azanigerone C by azaI would yield the corresponding aldehyde derivative of azanigerone A (PubMed:22921072). Finally, the dehydrogenase azaJ is proposed to convert the aldehyde functional group into the carboxylic acid, completing the conversion from azanigerone B to azanigerone A (PubMed:22921072). Alternatively, the oxidation of aldehyde to carboxylic acid may be catalyzed by the same P450 enzyme azaI via consecutive oxidation or by endogenous alcohol dehydrogenase (PubMed:22921072).</text>
</comment>
<comment type="pathway">
    <text evidence="2">Secondary metabolite biosynthesis.</text>
</comment>
<comment type="induction">
    <text evidence="2">Expression is under the control of the azaphilone cluster-specific transcription factor azaR (PubMed:22921072).</text>
</comment>
<comment type="similarity">
    <text evidence="4">Belongs to the LovG family.</text>
</comment>